<organism>
    <name type="scientific">Yersinia pestis (strain Pestoides F)</name>
    <dbReference type="NCBI Taxonomy" id="386656"/>
    <lineage>
        <taxon>Bacteria</taxon>
        <taxon>Pseudomonadati</taxon>
        <taxon>Pseudomonadota</taxon>
        <taxon>Gammaproteobacteria</taxon>
        <taxon>Enterobacterales</taxon>
        <taxon>Yersiniaceae</taxon>
        <taxon>Yersinia</taxon>
    </lineage>
</organism>
<evidence type="ECO:0000255" key="1">
    <source>
        <dbReference type="HAMAP-Rule" id="MF_00054"/>
    </source>
</evidence>
<sequence length="702" mass="77537">MARKTPIERYRNIGISAHIDAGKTTTTERILFYTGVNHKIGEVHDGAATMDWMEQEQERGITITSAATTCFWSGMAKQFEPHHVNIIDTPGHVDFTIEVERSMRVLDGAVMVYCAVGGVQPQSETVWRQANKYKVPRIAFVNKMDRMGANFLRVVGQLKSRLGANPVPLQLAIGAEEKFTGIIDLVKMKAINWNEADQGVTFEYEEIPADMAELAAEWHQNLVESAAEASDELMDKYLGGEELTEEEIKKALRQRVLKSEIILVTCGSAFKNKGVQAMLDAVIEYLPAPTDVESINGILDDGKDTPAVRHSDDKEPFSALAFKIATDPFVGNLTFFRVYSGIVNSGDTVLNSVKSQRERLGRIVQMHANKREEIKEVHAGDIAAAIGLKDVTTGDTLCDPNNPIILERMEFPEPVISVAVEPKTKADQEKMGMALGRLAKEDPSFRVWTDEESGQTIIAGMGELHLDILVDRMRREFNVEANVGKPQVAYRETIRETVKDVEGKHAKQSGGRGQYGHVVIDMSPLPPGGVGYEFVNEIVGGSIPKEFIPAVDKGIQEQLKSGPLAGYPVVDVKVRLHYGSYHDVDSSELAFKLAGSIAFKEGFKRAKPVLLEPIMKVEVETPEDYMGDVMGDLNRRRGIIEGMEDTATGKTVRVKVPLSEMFGYATDLRSQTQGRASYSMEFLEYAEAPSNVAKAVIEARGK</sequence>
<protein>
    <recommendedName>
        <fullName evidence="1">Elongation factor G</fullName>
        <shortName evidence="1">EF-G</shortName>
    </recommendedName>
</protein>
<comment type="function">
    <text evidence="1">Catalyzes the GTP-dependent ribosomal translocation step during translation elongation. During this step, the ribosome changes from the pre-translocational (PRE) to the post-translocational (POST) state as the newly formed A-site-bound peptidyl-tRNA and P-site-bound deacylated tRNA move to the P and E sites, respectively. Catalyzes the coordinated movement of the two tRNA molecules, the mRNA and conformational changes in the ribosome.</text>
</comment>
<comment type="subcellular location">
    <subcellularLocation>
        <location evidence="1">Cytoplasm</location>
    </subcellularLocation>
</comment>
<comment type="similarity">
    <text evidence="1">Belongs to the TRAFAC class translation factor GTPase superfamily. Classic translation factor GTPase family. EF-G/EF-2 subfamily.</text>
</comment>
<gene>
    <name evidence="1" type="primary">fusA</name>
    <name type="ordered locus">YPDSF_0127</name>
</gene>
<dbReference type="EMBL" id="CP000668">
    <property type="protein sequence ID" value="ABP38549.1"/>
    <property type="molecule type" value="Genomic_DNA"/>
</dbReference>
<dbReference type="RefSeq" id="WP_002212325.1">
    <property type="nucleotide sequence ID" value="NZ_CP009715.1"/>
</dbReference>
<dbReference type="SMR" id="A4TGY6"/>
<dbReference type="GeneID" id="96663201"/>
<dbReference type="KEGG" id="ypp:YPDSF_0127"/>
<dbReference type="PATRIC" id="fig|386656.14.peg.440"/>
<dbReference type="GO" id="GO:0005737">
    <property type="term" value="C:cytoplasm"/>
    <property type="evidence" value="ECO:0007669"/>
    <property type="project" value="UniProtKB-SubCell"/>
</dbReference>
<dbReference type="GO" id="GO:0005525">
    <property type="term" value="F:GTP binding"/>
    <property type="evidence" value="ECO:0007669"/>
    <property type="project" value="UniProtKB-UniRule"/>
</dbReference>
<dbReference type="GO" id="GO:0003924">
    <property type="term" value="F:GTPase activity"/>
    <property type="evidence" value="ECO:0007669"/>
    <property type="project" value="InterPro"/>
</dbReference>
<dbReference type="GO" id="GO:0097216">
    <property type="term" value="F:guanosine tetraphosphate binding"/>
    <property type="evidence" value="ECO:0007669"/>
    <property type="project" value="UniProtKB-ARBA"/>
</dbReference>
<dbReference type="GO" id="GO:0003746">
    <property type="term" value="F:translation elongation factor activity"/>
    <property type="evidence" value="ECO:0007669"/>
    <property type="project" value="UniProtKB-UniRule"/>
</dbReference>
<dbReference type="GO" id="GO:0032790">
    <property type="term" value="P:ribosome disassembly"/>
    <property type="evidence" value="ECO:0007669"/>
    <property type="project" value="TreeGrafter"/>
</dbReference>
<dbReference type="CDD" id="cd01886">
    <property type="entry name" value="EF-G"/>
    <property type="match status" value="1"/>
</dbReference>
<dbReference type="CDD" id="cd16262">
    <property type="entry name" value="EFG_III"/>
    <property type="match status" value="1"/>
</dbReference>
<dbReference type="CDD" id="cd01434">
    <property type="entry name" value="EFG_mtEFG1_IV"/>
    <property type="match status" value="1"/>
</dbReference>
<dbReference type="CDD" id="cd03713">
    <property type="entry name" value="EFG_mtEFG_C"/>
    <property type="match status" value="1"/>
</dbReference>
<dbReference type="CDD" id="cd04088">
    <property type="entry name" value="EFG_mtEFG_II"/>
    <property type="match status" value="1"/>
</dbReference>
<dbReference type="FunFam" id="2.40.30.10:FF:000006">
    <property type="entry name" value="Elongation factor G"/>
    <property type="match status" value="1"/>
</dbReference>
<dbReference type="FunFam" id="3.30.230.10:FF:000003">
    <property type="entry name" value="Elongation factor G"/>
    <property type="match status" value="1"/>
</dbReference>
<dbReference type="FunFam" id="3.30.70.240:FF:000001">
    <property type="entry name" value="Elongation factor G"/>
    <property type="match status" value="1"/>
</dbReference>
<dbReference type="FunFam" id="3.30.70.870:FF:000001">
    <property type="entry name" value="Elongation factor G"/>
    <property type="match status" value="1"/>
</dbReference>
<dbReference type="FunFam" id="3.40.50.300:FF:000029">
    <property type="entry name" value="Elongation factor G"/>
    <property type="match status" value="1"/>
</dbReference>
<dbReference type="Gene3D" id="3.30.230.10">
    <property type="match status" value="1"/>
</dbReference>
<dbReference type="Gene3D" id="3.30.70.240">
    <property type="match status" value="1"/>
</dbReference>
<dbReference type="Gene3D" id="3.30.70.870">
    <property type="entry name" value="Elongation Factor G (Translational Gtpase), domain 3"/>
    <property type="match status" value="1"/>
</dbReference>
<dbReference type="Gene3D" id="3.40.50.300">
    <property type="entry name" value="P-loop containing nucleotide triphosphate hydrolases"/>
    <property type="match status" value="1"/>
</dbReference>
<dbReference type="Gene3D" id="2.40.30.10">
    <property type="entry name" value="Translation factors"/>
    <property type="match status" value="1"/>
</dbReference>
<dbReference type="HAMAP" id="MF_00054_B">
    <property type="entry name" value="EF_G_EF_2_B"/>
    <property type="match status" value="1"/>
</dbReference>
<dbReference type="InterPro" id="IPR041095">
    <property type="entry name" value="EFG_II"/>
</dbReference>
<dbReference type="InterPro" id="IPR009022">
    <property type="entry name" value="EFG_III"/>
</dbReference>
<dbReference type="InterPro" id="IPR035647">
    <property type="entry name" value="EFG_III/V"/>
</dbReference>
<dbReference type="InterPro" id="IPR047872">
    <property type="entry name" value="EFG_IV"/>
</dbReference>
<dbReference type="InterPro" id="IPR035649">
    <property type="entry name" value="EFG_V"/>
</dbReference>
<dbReference type="InterPro" id="IPR000640">
    <property type="entry name" value="EFG_V-like"/>
</dbReference>
<dbReference type="InterPro" id="IPR004161">
    <property type="entry name" value="EFTu-like_2"/>
</dbReference>
<dbReference type="InterPro" id="IPR031157">
    <property type="entry name" value="G_TR_CS"/>
</dbReference>
<dbReference type="InterPro" id="IPR027417">
    <property type="entry name" value="P-loop_NTPase"/>
</dbReference>
<dbReference type="InterPro" id="IPR020568">
    <property type="entry name" value="Ribosomal_Su5_D2-typ_SF"/>
</dbReference>
<dbReference type="InterPro" id="IPR014721">
    <property type="entry name" value="Ribsml_uS5_D2-typ_fold_subgr"/>
</dbReference>
<dbReference type="InterPro" id="IPR005225">
    <property type="entry name" value="Small_GTP-bd"/>
</dbReference>
<dbReference type="InterPro" id="IPR000795">
    <property type="entry name" value="T_Tr_GTP-bd_dom"/>
</dbReference>
<dbReference type="InterPro" id="IPR009000">
    <property type="entry name" value="Transl_B-barrel_sf"/>
</dbReference>
<dbReference type="InterPro" id="IPR004540">
    <property type="entry name" value="Transl_elong_EFG/EF2"/>
</dbReference>
<dbReference type="InterPro" id="IPR005517">
    <property type="entry name" value="Transl_elong_EFG/EF2_IV"/>
</dbReference>
<dbReference type="NCBIfam" id="TIGR00484">
    <property type="entry name" value="EF-G"/>
    <property type="match status" value="1"/>
</dbReference>
<dbReference type="NCBIfam" id="NF009381">
    <property type="entry name" value="PRK12740.1-5"/>
    <property type="match status" value="1"/>
</dbReference>
<dbReference type="NCBIfam" id="TIGR00231">
    <property type="entry name" value="small_GTP"/>
    <property type="match status" value="1"/>
</dbReference>
<dbReference type="PANTHER" id="PTHR43261:SF1">
    <property type="entry name" value="RIBOSOME-RELEASING FACTOR 2, MITOCHONDRIAL"/>
    <property type="match status" value="1"/>
</dbReference>
<dbReference type="PANTHER" id="PTHR43261">
    <property type="entry name" value="TRANSLATION ELONGATION FACTOR G-RELATED"/>
    <property type="match status" value="1"/>
</dbReference>
<dbReference type="Pfam" id="PF00679">
    <property type="entry name" value="EFG_C"/>
    <property type="match status" value="1"/>
</dbReference>
<dbReference type="Pfam" id="PF14492">
    <property type="entry name" value="EFG_III"/>
    <property type="match status" value="1"/>
</dbReference>
<dbReference type="Pfam" id="PF03764">
    <property type="entry name" value="EFG_IV"/>
    <property type="match status" value="1"/>
</dbReference>
<dbReference type="Pfam" id="PF00009">
    <property type="entry name" value="GTP_EFTU"/>
    <property type="match status" value="1"/>
</dbReference>
<dbReference type="Pfam" id="PF03144">
    <property type="entry name" value="GTP_EFTU_D2"/>
    <property type="match status" value="1"/>
</dbReference>
<dbReference type="PRINTS" id="PR00315">
    <property type="entry name" value="ELONGATNFCT"/>
</dbReference>
<dbReference type="SMART" id="SM00838">
    <property type="entry name" value="EFG_C"/>
    <property type="match status" value="1"/>
</dbReference>
<dbReference type="SMART" id="SM00889">
    <property type="entry name" value="EFG_IV"/>
    <property type="match status" value="1"/>
</dbReference>
<dbReference type="SUPFAM" id="SSF54980">
    <property type="entry name" value="EF-G C-terminal domain-like"/>
    <property type="match status" value="2"/>
</dbReference>
<dbReference type="SUPFAM" id="SSF52540">
    <property type="entry name" value="P-loop containing nucleoside triphosphate hydrolases"/>
    <property type="match status" value="1"/>
</dbReference>
<dbReference type="SUPFAM" id="SSF54211">
    <property type="entry name" value="Ribosomal protein S5 domain 2-like"/>
    <property type="match status" value="1"/>
</dbReference>
<dbReference type="SUPFAM" id="SSF50447">
    <property type="entry name" value="Translation proteins"/>
    <property type="match status" value="1"/>
</dbReference>
<dbReference type="PROSITE" id="PS00301">
    <property type="entry name" value="G_TR_1"/>
    <property type="match status" value="1"/>
</dbReference>
<dbReference type="PROSITE" id="PS51722">
    <property type="entry name" value="G_TR_2"/>
    <property type="match status" value="1"/>
</dbReference>
<keyword id="KW-0963">Cytoplasm</keyword>
<keyword id="KW-0251">Elongation factor</keyword>
<keyword id="KW-0342">GTP-binding</keyword>
<keyword id="KW-0547">Nucleotide-binding</keyword>
<keyword id="KW-0648">Protein biosynthesis</keyword>
<name>EFG_YERPP</name>
<reference key="1">
    <citation type="submission" date="2007-02" db="EMBL/GenBank/DDBJ databases">
        <title>Complete sequence of chromosome of Yersinia pestis Pestoides F.</title>
        <authorList>
            <consortium name="US DOE Joint Genome Institute"/>
            <person name="Copeland A."/>
            <person name="Lucas S."/>
            <person name="Lapidus A."/>
            <person name="Barry K."/>
            <person name="Detter J.C."/>
            <person name="Glavina del Rio T."/>
            <person name="Hammon N."/>
            <person name="Israni S."/>
            <person name="Dalin E."/>
            <person name="Tice H."/>
            <person name="Pitluck S."/>
            <person name="Di Bartolo G."/>
            <person name="Chain P."/>
            <person name="Malfatti S."/>
            <person name="Shin M."/>
            <person name="Vergez L."/>
            <person name="Schmutz J."/>
            <person name="Larimer F."/>
            <person name="Land M."/>
            <person name="Hauser L."/>
            <person name="Worsham P."/>
            <person name="Chu M."/>
            <person name="Bearden S."/>
            <person name="Garcia E."/>
            <person name="Richardson P."/>
        </authorList>
    </citation>
    <scope>NUCLEOTIDE SEQUENCE [LARGE SCALE GENOMIC DNA]</scope>
    <source>
        <strain>Pestoides F</strain>
    </source>
</reference>
<proteinExistence type="inferred from homology"/>
<accession>A4TGY6</accession>
<feature type="chain" id="PRO_1000008898" description="Elongation factor G">
    <location>
        <begin position="1"/>
        <end position="702"/>
    </location>
</feature>
<feature type="domain" description="tr-type G">
    <location>
        <begin position="8"/>
        <end position="290"/>
    </location>
</feature>
<feature type="binding site" evidence="1">
    <location>
        <begin position="17"/>
        <end position="24"/>
    </location>
    <ligand>
        <name>GTP</name>
        <dbReference type="ChEBI" id="CHEBI:37565"/>
    </ligand>
</feature>
<feature type="binding site" evidence="1">
    <location>
        <begin position="88"/>
        <end position="92"/>
    </location>
    <ligand>
        <name>GTP</name>
        <dbReference type="ChEBI" id="CHEBI:37565"/>
    </ligand>
</feature>
<feature type="binding site" evidence="1">
    <location>
        <begin position="142"/>
        <end position="145"/>
    </location>
    <ligand>
        <name>GTP</name>
        <dbReference type="ChEBI" id="CHEBI:37565"/>
    </ligand>
</feature>